<protein>
    <recommendedName>
        <fullName evidence="1">Sulfite reductase [NADPH] flavoprotein alpha-component</fullName>
        <shortName evidence="1">SiR-FP</shortName>
        <ecNumber evidence="1">1.8.1.2</ecNumber>
    </recommendedName>
</protein>
<reference key="1">
    <citation type="journal article" date="2006" name="Genome Res.">
        <title>Massive genome erosion and functional adaptations provide insights into the symbiotic lifestyle of Sodalis glossinidius in the tsetse host.</title>
        <authorList>
            <person name="Toh H."/>
            <person name="Weiss B.L."/>
            <person name="Perkin S.A.H."/>
            <person name="Yamashita A."/>
            <person name="Oshima K."/>
            <person name="Hattori M."/>
            <person name="Aksoy S."/>
        </authorList>
    </citation>
    <scope>NUCLEOTIDE SEQUENCE [LARGE SCALE GENOMIC DNA]</scope>
    <source>
        <strain>morsitans</strain>
    </source>
</reference>
<proteinExistence type="inferred from homology"/>
<keyword id="KW-0028">Amino-acid biosynthesis</keyword>
<keyword id="KW-0198">Cysteine biosynthesis</keyword>
<keyword id="KW-0249">Electron transport</keyword>
<keyword id="KW-0274">FAD</keyword>
<keyword id="KW-0285">Flavoprotein</keyword>
<keyword id="KW-0288">FMN</keyword>
<keyword id="KW-0521">NADP</keyword>
<keyword id="KW-0560">Oxidoreductase</keyword>
<keyword id="KW-0813">Transport</keyword>
<dbReference type="EC" id="1.8.1.2" evidence="1"/>
<dbReference type="EMBL" id="AP008232">
    <property type="protein sequence ID" value="BAE73791.1"/>
    <property type="molecule type" value="Genomic_DNA"/>
</dbReference>
<dbReference type="RefSeq" id="WP_011410489.1">
    <property type="nucleotide sequence ID" value="NC_007712.1"/>
</dbReference>
<dbReference type="SMR" id="Q2NVN4"/>
<dbReference type="STRING" id="343509.SG0516"/>
<dbReference type="KEGG" id="sgl:SG0516"/>
<dbReference type="eggNOG" id="COG0369">
    <property type="taxonomic scope" value="Bacteria"/>
</dbReference>
<dbReference type="HOGENOM" id="CLU_001570_17_7_6"/>
<dbReference type="OrthoDB" id="9816402at2"/>
<dbReference type="BioCyc" id="SGLO343509:SGP1_RS04595-MONOMER"/>
<dbReference type="UniPathway" id="UPA00140">
    <property type="reaction ID" value="UER00207"/>
</dbReference>
<dbReference type="Proteomes" id="UP000001932">
    <property type="component" value="Chromosome"/>
</dbReference>
<dbReference type="GO" id="GO:0005829">
    <property type="term" value="C:cytosol"/>
    <property type="evidence" value="ECO:0007669"/>
    <property type="project" value="TreeGrafter"/>
</dbReference>
<dbReference type="GO" id="GO:0050660">
    <property type="term" value="F:flavin adenine dinucleotide binding"/>
    <property type="evidence" value="ECO:0007669"/>
    <property type="project" value="InterPro"/>
</dbReference>
<dbReference type="GO" id="GO:0010181">
    <property type="term" value="F:FMN binding"/>
    <property type="evidence" value="ECO:0007669"/>
    <property type="project" value="InterPro"/>
</dbReference>
<dbReference type="GO" id="GO:0004783">
    <property type="term" value="F:sulfite reductase (NADPH) activity"/>
    <property type="evidence" value="ECO:0007669"/>
    <property type="project" value="UniProtKB-UniRule"/>
</dbReference>
<dbReference type="GO" id="GO:0019344">
    <property type="term" value="P:cysteine biosynthetic process"/>
    <property type="evidence" value="ECO:0007669"/>
    <property type="project" value="UniProtKB-KW"/>
</dbReference>
<dbReference type="GO" id="GO:0070814">
    <property type="term" value="P:hydrogen sulfide biosynthetic process"/>
    <property type="evidence" value="ECO:0007669"/>
    <property type="project" value="UniProtKB-UniRule"/>
</dbReference>
<dbReference type="GO" id="GO:0000103">
    <property type="term" value="P:sulfate assimilation"/>
    <property type="evidence" value="ECO:0007669"/>
    <property type="project" value="UniProtKB-UniRule"/>
</dbReference>
<dbReference type="CDD" id="cd06199">
    <property type="entry name" value="SiR"/>
    <property type="match status" value="1"/>
</dbReference>
<dbReference type="FunFam" id="3.40.50.80:FF:000001">
    <property type="entry name" value="NADPH--cytochrome P450 reductase 1"/>
    <property type="match status" value="1"/>
</dbReference>
<dbReference type="FunFam" id="1.20.990.10:FF:000004">
    <property type="entry name" value="Sulfite reductase [NADPH] flavoprotein alpha-component"/>
    <property type="match status" value="1"/>
</dbReference>
<dbReference type="FunFam" id="3.40.50.360:FF:000018">
    <property type="entry name" value="Sulfite reductase [NADPH] flavoprotein alpha-component"/>
    <property type="match status" value="1"/>
</dbReference>
<dbReference type="Gene3D" id="3.40.50.360">
    <property type="match status" value="1"/>
</dbReference>
<dbReference type="Gene3D" id="1.20.990.10">
    <property type="entry name" value="NADPH-cytochrome p450 Reductase, Chain A, domain 3"/>
    <property type="match status" value="1"/>
</dbReference>
<dbReference type="Gene3D" id="3.40.50.80">
    <property type="entry name" value="Nucleotide-binding domain of ferredoxin-NADP reductase (FNR) module"/>
    <property type="match status" value="1"/>
</dbReference>
<dbReference type="Gene3D" id="2.40.30.10">
    <property type="entry name" value="Translation factors"/>
    <property type="match status" value="1"/>
</dbReference>
<dbReference type="HAMAP" id="MF_01541">
    <property type="entry name" value="CysJ"/>
    <property type="match status" value="1"/>
</dbReference>
<dbReference type="InterPro" id="IPR010199">
    <property type="entry name" value="CysJ"/>
</dbReference>
<dbReference type="InterPro" id="IPR003097">
    <property type="entry name" value="CysJ-like_FAD-binding"/>
</dbReference>
<dbReference type="InterPro" id="IPR029758">
    <property type="entry name" value="CysJ_Proteobact"/>
</dbReference>
<dbReference type="InterPro" id="IPR017927">
    <property type="entry name" value="FAD-bd_FR_type"/>
</dbReference>
<dbReference type="InterPro" id="IPR001094">
    <property type="entry name" value="Flavdoxin-like"/>
</dbReference>
<dbReference type="InterPro" id="IPR008254">
    <property type="entry name" value="Flavodoxin/NO_synth"/>
</dbReference>
<dbReference type="InterPro" id="IPR001709">
    <property type="entry name" value="Flavoprot_Pyr_Nucl_cyt_Rdtase"/>
</dbReference>
<dbReference type="InterPro" id="IPR029039">
    <property type="entry name" value="Flavoprotein-like_sf"/>
</dbReference>
<dbReference type="InterPro" id="IPR039261">
    <property type="entry name" value="FNR_nucleotide-bd"/>
</dbReference>
<dbReference type="InterPro" id="IPR023173">
    <property type="entry name" value="NADPH_Cyt_P450_Rdtase_alpha"/>
</dbReference>
<dbReference type="InterPro" id="IPR001433">
    <property type="entry name" value="OxRdtase_FAD/NAD-bd"/>
</dbReference>
<dbReference type="InterPro" id="IPR017938">
    <property type="entry name" value="Riboflavin_synthase-like_b-brl"/>
</dbReference>
<dbReference type="NCBIfam" id="TIGR01931">
    <property type="entry name" value="cysJ"/>
    <property type="match status" value="1"/>
</dbReference>
<dbReference type="NCBIfam" id="NF008197">
    <property type="entry name" value="PRK10953.1"/>
    <property type="match status" value="1"/>
</dbReference>
<dbReference type="PANTHER" id="PTHR19384:SF128">
    <property type="entry name" value="NADPH OXIDOREDUCTASE A"/>
    <property type="match status" value="1"/>
</dbReference>
<dbReference type="PANTHER" id="PTHR19384">
    <property type="entry name" value="NITRIC OXIDE SYNTHASE-RELATED"/>
    <property type="match status" value="1"/>
</dbReference>
<dbReference type="Pfam" id="PF00667">
    <property type="entry name" value="FAD_binding_1"/>
    <property type="match status" value="1"/>
</dbReference>
<dbReference type="Pfam" id="PF00258">
    <property type="entry name" value="Flavodoxin_1"/>
    <property type="match status" value="1"/>
</dbReference>
<dbReference type="Pfam" id="PF00175">
    <property type="entry name" value="NAD_binding_1"/>
    <property type="match status" value="1"/>
</dbReference>
<dbReference type="PIRSF" id="PIRSF000207">
    <property type="entry name" value="SiR-FP_CysJ"/>
    <property type="match status" value="1"/>
</dbReference>
<dbReference type="PRINTS" id="PR00369">
    <property type="entry name" value="FLAVODOXIN"/>
</dbReference>
<dbReference type="PRINTS" id="PR00371">
    <property type="entry name" value="FPNCR"/>
</dbReference>
<dbReference type="SUPFAM" id="SSF52343">
    <property type="entry name" value="Ferredoxin reductase-like, C-terminal NADP-linked domain"/>
    <property type="match status" value="1"/>
</dbReference>
<dbReference type="SUPFAM" id="SSF52218">
    <property type="entry name" value="Flavoproteins"/>
    <property type="match status" value="1"/>
</dbReference>
<dbReference type="SUPFAM" id="SSF63380">
    <property type="entry name" value="Riboflavin synthase domain-like"/>
    <property type="match status" value="1"/>
</dbReference>
<dbReference type="PROSITE" id="PS51384">
    <property type="entry name" value="FAD_FR"/>
    <property type="match status" value="1"/>
</dbReference>
<dbReference type="PROSITE" id="PS50902">
    <property type="entry name" value="FLAVODOXIN_LIKE"/>
    <property type="match status" value="1"/>
</dbReference>
<sequence length="603" mass="66760">MTKQAPPTTVLPLSEEQLDRLQTATGDLSPLQLAWISGYFWGRVAEGKPAVPPPSQSAAAAAPITLISASQTGNARRLAEQLRDDLIAARLDVVLINAGDYKFKQIAQEKLLLIITSTQGEGDPPEEAVALYKYLFSKKAPALPSTQFAVFGLGDSSYEHFAKTGKDFDSRLAELGAQRLHDRVDADVDYQAQAETWRAAIVEQLKSRVAVASPAQQQLAASGNVNEVDSSPYTKEAPLTAHLALSQKITSRQSLKDVRHLEIDLTDSGLRYQPGDALGVWYENDPALICELLALLWLKGKGDEPVPVAGQTLPLAEALQKHYELTQNTPAIVAGYAAFARDEALLAVVADKAQLQQFALATPIVDMVRRAPIELSAEQLLSLLRPLTPRLYSIASSQAEVGEEVHITVGVVRYEIDGRPRTGGASGYLADRLGEDDELRVFIEHNDNFRLPGDPNTPVIMIGPGTGIAPFRAFLQQREADGAPGQNWLFFGNPHFTDDFLYQVEWQRYVKERLLTKISLAWSRDQAEKIYVQDRVREQGAEVWRWIQQGAHIYVCGDANRMARDVEQALVAVVAEYGCMDPEQADEYLSELRIERRYQRDVY</sequence>
<feature type="chain" id="PRO_0000292977" description="Sulfite reductase [NADPH] flavoprotein alpha-component">
    <location>
        <begin position="1"/>
        <end position="603"/>
    </location>
</feature>
<feature type="domain" description="Flavodoxin-like" evidence="1">
    <location>
        <begin position="64"/>
        <end position="202"/>
    </location>
</feature>
<feature type="domain" description="FAD-binding FR-type" evidence="1">
    <location>
        <begin position="236"/>
        <end position="452"/>
    </location>
</feature>
<feature type="binding site" evidence="1">
    <location>
        <begin position="70"/>
        <end position="75"/>
    </location>
    <ligand>
        <name>FMN</name>
        <dbReference type="ChEBI" id="CHEBI:58210"/>
    </ligand>
</feature>
<feature type="binding site" evidence="1">
    <location>
        <begin position="117"/>
        <end position="120"/>
    </location>
    <ligand>
        <name>FMN</name>
        <dbReference type="ChEBI" id="CHEBI:58210"/>
    </ligand>
</feature>
<feature type="binding site" evidence="1">
    <location>
        <begin position="153"/>
        <end position="162"/>
    </location>
    <ligand>
        <name>FMN</name>
        <dbReference type="ChEBI" id="CHEBI:58210"/>
    </ligand>
</feature>
<feature type="binding site" evidence="1">
    <location>
        <position position="326"/>
    </location>
    <ligand>
        <name>FAD</name>
        <dbReference type="ChEBI" id="CHEBI:57692"/>
    </ligand>
</feature>
<feature type="binding site" evidence="1">
    <location>
        <position position="360"/>
    </location>
    <ligand>
        <name>FAD</name>
        <dbReference type="ChEBI" id="CHEBI:57692"/>
    </ligand>
</feature>
<feature type="binding site" evidence="1">
    <location>
        <begin position="390"/>
        <end position="393"/>
    </location>
    <ligand>
        <name>FAD</name>
        <dbReference type="ChEBI" id="CHEBI:57692"/>
    </ligand>
</feature>
<feature type="binding site" evidence="1">
    <location>
        <begin position="408"/>
        <end position="410"/>
    </location>
    <ligand>
        <name>FAD</name>
        <dbReference type="ChEBI" id="CHEBI:57692"/>
    </ligand>
</feature>
<feature type="binding site" evidence="1">
    <location>
        <position position="414"/>
    </location>
    <ligand>
        <name>FAD</name>
        <dbReference type="ChEBI" id="CHEBI:57692"/>
    </ligand>
</feature>
<feature type="binding site" evidence="1">
    <location>
        <begin position="423"/>
        <end position="426"/>
    </location>
    <ligand>
        <name>FAD</name>
        <dbReference type="ChEBI" id="CHEBI:57692"/>
    </ligand>
</feature>
<feature type="binding site" evidence="1">
    <location>
        <begin position="523"/>
        <end position="524"/>
    </location>
    <ligand>
        <name>NADP(+)</name>
        <dbReference type="ChEBI" id="CHEBI:58349"/>
    </ligand>
</feature>
<feature type="binding site" evidence="1">
    <location>
        <begin position="529"/>
        <end position="533"/>
    </location>
    <ligand>
        <name>NADP(+)</name>
        <dbReference type="ChEBI" id="CHEBI:58349"/>
    </ligand>
</feature>
<feature type="binding site" evidence="1">
    <location>
        <position position="565"/>
    </location>
    <ligand>
        <name>NADP(+)</name>
        <dbReference type="ChEBI" id="CHEBI:58349"/>
    </ligand>
</feature>
<feature type="binding site" evidence="1">
    <location>
        <position position="603"/>
    </location>
    <ligand>
        <name>FAD</name>
        <dbReference type="ChEBI" id="CHEBI:57692"/>
    </ligand>
</feature>
<gene>
    <name evidence="1" type="primary">cysJ</name>
    <name type="ordered locus">SG0516</name>
</gene>
<evidence type="ECO:0000255" key="1">
    <source>
        <dbReference type="HAMAP-Rule" id="MF_01541"/>
    </source>
</evidence>
<accession>Q2NVN4</accession>
<name>CYSJ_SODGM</name>
<organism>
    <name type="scientific">Sodalis glossinidius (strain morsitans)</name>
    <dbReference type="NCBI Taxonomy" id="343509"/>
    <lineage>
        <taxon>Bacteria</taxon>
        <taxon>Pseudomonadati</taxon>
        <taxon>Pseudomonadota</taxon>
        <taxon>Gammaproteobacteria</taxon>
        <taxon>Enterobacterales</taxon>
        <taxon>Bruguierivoracaceae</taxon>
        <taxon>Sodalis</taxon>
    </lineage>
</organism>
<comment type="function">
    <text evidence="1">Component of the sulfite reductase complex that catalyzes the 6-electron reduction of sulfite to sulfide. This is one of several activities required for the biosynthesis of L-cysteine from sulfate. The flavoprotein component catalyzes the electron flow from NADPH -&gt; FAD -&gt; FMN to the hemoprotein component.</text>
</comment>
<comment type="catalytic activity">
    <reaction evidence="1">
        <text>hydrogen sulfide + 3 NADP(+) + 3 H2O = sulfite + 3 NADPH + 4 H(+)</text>
        <dbReference type="Rhea" id="RHEA:13801"/>
        <dbReference type="ChEBI" id="CHEBI:15377"/>
        <dbReference type="ChEBI" id="CHEBI:15378"/>
        <dbReference type="ChEBI" id="CHEBI:17359"/>
        <dbReference type="ChEBI" id="CHEBI:29919"/>
        <dbReference type="ChEBI" id="CHEBI:57783"/>
        <dbReference type="ChEBI" id="CHEBI:58349"/>
        <dbReference type="EC" id="1.8.1.2"/>
    </reaction>
</comment>
<comment type="cofactor">
    <cofactor evidence="1">
        <name>FAD</name>
        <dbReference type="ChEBI" id="CHEBI:57692"/>
    </cofactor>
    <text evidence="1">Binds 1 FAD per subunit.</text>
</comment>
<comment type="cofactor">
    <cofactor evidence="1">
        <name>FMN</name>
        <dbReference type="ChEBI" id="CHEBI:58210"/>
    </cofactor>
    <text evidence="1">Binds 1 FMN per subunit.</text>
</comment>
<comment type="pathway">
    <text evidence="1">Sulfur metabolism; hydrogen sulfide biosynthesis; hydrogen sulfide from sulfite (NADPH route): step 1/1.</text>
</comment>
<comment type="subunit">
    <text evidence="1">Alpha(8)-beta(8). The alpha component is a flavoprotein, the beta component is a hemoprotein.</text>
</comment>
<comment type="similarity">
    <text evidence="1">Belongs to the NADPH-dependent sulphite reductase flavoprotein subunit CysJ family.</text>
</comment>
<comment type="similarity">
    <text evidence="1">In the N-terminal section; belongs to the flavodoxin family.</text>
</comment>
<comment type="similarity">
    <text evidence="1">In the C-terminal section; belongs to the flavoprotein pyridine nucleotide cytochrome reductase family.</text>
</comment>